<keyword id="KW-0004">4Fe-4S</keyword>
<keyword id="KW-0408">Iron</keyword>
<keyword id="KW-0411">Iron-sulfur</keyword>
<keyword id="KW-0479">Metal-binding</keyword>
<keyword id="KW-0500">Molybdenum</keyword>
<keyword id="KW-0560">Oxidoreductase</keyword>
<keyword id="KW-0574">Periplasm</keyword>
<keyword id="KW-0732">Signal</keyword>
<organism>
    <name type="scientific">Ideonella dechloratans</name>
    <dbReference type="NCBI Taxonomy" id="36863"/>
    <lineage>
        <taxon>Bacteria</taxon>
        <taxon>Pseudomonadati</taxon>
        <taxon>Pseudomonadota</taxon>
        <taxon>Betaproteobacteria</taxon>
        <taxon>Burkholderiales</taxon>
        <taxon>Sphaerotilaceae</taxon>
        <taxon>Ideonella</taxon>
    </lineage>
</organism>
<dbReference type="EC" id="1.97.1.1"/>
<dbReference type="EMBL" id="AJ566363">
    <property type="protein sequence ID" value="CAD97447.1"/>
    <property type="molecule type" value="Genomic_DNA"/>
</dbReference>
<dbReference type="SMR" id="P60068"/>
<dbReference type="TCDB" id="5.A.3.8.2">
    <property type="family name" value="the prokaryotic molybdopterin-containing oxidoreductase (pmo) family"/>
</dbReference>
<dbReference type="BioCyc" id="MetaCyc:MONOMER-15697"/>
<dbReference type="BRENDA" id="1.97.1.1">
    <property type="organism ID" value="2756"/>
</dbReference>
<dbReference type="GO" id="GO:0042597">
    <property type="term" value="C:periplasmic space"/>
    <property type="evidence" value="ECO:0007669"/>
    <property type="project" value="UniProtKB-SubCell"/>
</dbReference>
<dbReference type="GO" id="GO:0051539">
    <property type="term" value="F:4 iron, 4 sulfur cluster binding"/>
    <property type="evidence" value="ECO:0007669"/>
    <property type="project" value="UniProtKB-KW"/>
</dbReference>
<dbReference type="GO" id="GO:0047143">
    <property type="term" value="F:chlorate reductase activity"/>
    <property type="evidence" value="ECO:0007669"/>
    <property type="project" value="UniProtKB-EC"/>
</dbReference>
<dbReference type="GO" id="GO:0046872">
    <property type="term" value="F:metal ion binding"/>
    <property type="evidence" value="ECO:0007669"/>
    <property type="project" value="UniProtKB-KW"/>
</dbReference>
<dbReference type="GO" id="GO:0043546">
    <property type="term" value="F:molybdopterin cofactor binding"/>
    <property type="evidence" value="ECO:0007669"/>
    <property type="project" value="InterPro"/>
</dbReference>
<dbReference type="CDD" id="cd02776">
    <property type="entry name" value="MopB_CT_Nitrate-R-NarG-like"/>
    <property type="match status" value="1"/>
</dbReference>
<dbReference type="CDD" id="cd02750">
    <property type="entry name" value="MopB_Nitrate-R-NarG-like"/>
    <property type="match status" value="1"/>
</dbReference>
<dbReference type="Gene3D" id="3.40.50.12440">
    <property type="match status" value="3"/>
</dbReference>
<dbReference type="Gene3D" id="2.20.25.90">
    <property type="entry name" value="ADC-like domains"/>
    <property type="match status" value="1"/>
</dbReference>
<dbReference type="Gene3D" id="3.40.228.10">
    <property type="entry name" value="Dimethylsulfoxide Reductase, domain 2"/>
    <property type="match status" value="1"/>
</dbReference>
<dbReference type="InterPro" id="IPR009010">
    <property type="entry name" value="Asp_de-COase-like_dom_sf"/>
</dbReference>
<dbReference type="InterPro" id="IPR017840">
    <property type="entry name" value="DMSO_Rdtase_II_Mopterin_su"/>
</dbReference>
<dbReference type="InterPro" id="IPR037943">
    <property type="entry name" value="MopB_CT_Nitrate-R-NarG-like"/>
</dbReference>
<dbReference type="InterPro" id="IPR006657">
    <property type="entry name" value="MoPterin_dinucl-bd_dom"/>
</dbReference>
<dbReference type="InterPro" id="IPR006656">
    <property type="entry name" value="Mopterin_OxRdtase"/>
</dbReference>
<dbReference type="InterPro" id="IPR006963">
    <property type="entry name" value="Mopterin_OxRdtase_4Fe-4S_dom"/>
</dbReference>
<dbReference type="InterPro" id="IPR050612">
    <property type="entry name" value="Prok_Mopterin_Oxidored"/>
</dbReference>
<dbReference type="InterPro" id="IPR006311">
    <property type="entry name" value="TAT_signal"/>
</dbReference>
<dbReference type="NCBIfam" id="TIGR03479">
    <property type="entry name" value="DMSO_red_II_alp"/>
    <property type="match status" value="1"/>
</dbReference>
<dbReference type="PANTHER" id="PTHR43742:SF6">
    <property type="entry name" value="OXIDOREDUCTASE YYAE-RELATED"/>
    <property type="match status" value="1"/>
</dbReference>
<dbReference type="PANTHER" id="PTHR43742">
    <property type="entry name" value="TRIMETHYLAMINE-N-OXIDE REDUCTASE"/>
    <property type="match status" value="1"/>
</dbReference>
<dbReference type="Pfam" id="PF00384">
    <property type="entry name" value="Molybdopterin"/>
    <property type="match status" value="1"/>
</dbReference>
<dbReference type="Pfam" id="PF01568">
    <property type="entry name" value="Molydop_binding"/>
    <property type="match status" value="1"/>
</dbReference>
<dbReference type="SUPFAM" id="SSF50692">
    <property type="entry name" value="ADC-like"/>
    <property type="match status" value="1"/>
</dbReference>
<dbReference type="SUPFAM" id="SSF53706">
    <property type="entry name" value="Formate dehydrogenase/DMSO reductase, domains 1-3"/>
    <property type="match status" value="1"/>
</dbReference>
<dbReference type="PROSITE" id="PS51669">
    <property type="entry name" value="4FE4S_MOW_BIS_MGD"/>
    <property type="match status" value="1"/>
</dbReference>
<dbReference type="PROSITE" id="PS51318">
    <property type="entry name" value="TAT"/>
    <property type="match status" value="1"/>
</dbReference>
<feature type="signal peptide" description="Tat-type signal" evidence="2">
    <location>
        <begin position="1"/>
        <end position="32"/>
    </location>
</feature>
<feature type="chain" id="PRO_0000019173" description="Chlorate reductase subunit alpha">
    <location>
        <begin position="33"/>
        <end position="914"/>
    </location>
</feature>
<feature type="domain" description="4Fe-4S Mo/W bis-MGD-type" evidence="3">
    <location>
        <begin position="62"/>
        <end position="125"/>
    </location>
</feature>
<feature type="binding site" evidence="3">
    <location>
        <position position="69"/>
    </location>
    <ligand>
        <name>[4Fe-4S] cluster</name>
        <dbReference type="ChEBI" id="CHEBI:49883"/>
    </ligand>
</feature>
<feature type="binding site" evidence="3">
    <location>
        <position position="73"/>
    </location>
    <ligand>
        <name>[4Fe-4S] cluster</name>
        <dbReference type="ChEBI" id="CHEBI:49883"/>
    </ligand>
</feature>
<feature type="binding site" evidence="3">
    <location>
        <position position="77"/>
    </location>
    <ligand>
        <name>[4Fe-4S] cluster</name>
        <dbReference type="ChEBI" id="CHEBI:49883"/>
    </ligand>
</feature>
<feature type="binding site" evidence="3">
    <location>
        <position position="111"/>
    </location>
    <ligand>
        <name>[4Fe-4S] cluster</name>
        <dbReference type="ChEBI" id="CHEBI:49883"/>
    </ligand>
</feature>
<feature type="binding site" evidence="1">
    <location>
        <position position="205"/>
    </location>
    <ligand>
        <name>Mo-bis(molybdopterin guanine dinucleotide)</name>
        <dbReference type="ChEBI" id="CHEBI:60539"/>
    </ligand>
    <ligandPart>
        <name>Mo</name>
        <dbReference type="ChEBI" id="CHEBI:28685"/>
    </ligandPart>
</feature>
<proteinExistence type="evidence at protein level"/>
<protein>
    <recommendedName>
        <fullName>Chlorate reductase subunit alpha</fullName>
        <ecNumber>1.97.1.1</ecNumber>
    </recommendedName>
    <alternativeName>
        <fullName>Chlorate reductase molybdenum subunit</fullName>
    </alternativeName>
</protein>
<reference key="1">
    <citation type="journal article" date="2003" name="Appl. Environ. Microbiol.">
        <title>A gene cluster for chlorate metabolism in Ideonella dechloratans.</title>
        <authorList>
            <person name="Danielsson Thorell H."/>
            <person name="Stenklo K."/>
            <person name="Karlsson J."/>
            <person name="Nilsson T."/>
        </authorList>
    </citation>
    <scope>NUCLEOTIDE SEQUENCE [GENOMIC DNA]</scope>
    <scope>CHARACTERIZATION</scope>
</reference>
<accession>P60068</accession>
<comment type="function">
    <text>Terminal reductase that allows anaerobic growth on chlorate as the sole respiratory oxidant.</text>
</comment>
<comment type="catalytic activity">
    <reaction>
        <text>chlorate + AH2 = chlorite + A + H2O</text>
        <dbReference type="Rhea" id="RHEA:16349"/>
        <dbReference type="ChEBI" id="CHEBI:13193"/>
        <dbReference type="ChEBI" id="CHEBI:15377"/>
        <dbReference type="ChEBI" id="CHEBI:17441"/>
        <dbReference type="ChEBI" id="CHEBI:17499"/>
        <dbReference type="ChEBI" id="CHEBI:49709"/>
        <dbReference type="EC" id="1.97.1.1"/>
    </reaction>
</comment>
<comment type="cofactor">
    <cofactor evidence="4">
        <name>[4Fe-4S] cluster</name>
        <dbReference type="ChEBI" id="CHEBI:49883"/>
    </cofactor>
    <text evidence="4">Binds 1 [4Fe-4S] cluster.</text>
</comment>
<comment type="cofactor">
    <cofactor evidence="4">
        <name>Mo-bis(molybdopterin guanine dinucleotide)</name>
        <dbReference type="ChEBI" id="CHEBI:60539"/>
    </cofactor>
    <text evidence="4">Binds 1 molybdenum-bis(molybdopterin guanine dinucleotide) (Mo-bis-MGD) cofactor per subunit.</text>
</comment>
<comment type="subunit">
    <text>Heterotrimer of alpha, beta and gamma subunits.</text>
</comment>
<comment type="subcellular location">
    <subcellularLocation>
        <location>Periplasm</location>
    </subcellularLocation>
</comment>
<comment type="PTM">
    <text>Predicted to be exported by the Tat system. The position of the signal peptide cleavage has not been experimentally proven.</text>
</comment>
<comment type="biotechnology">
    <text>Has potential use in bioremediation of waste sites contaminated with chlorate, such as pulp and paper industry wastewater.</text>
</comment>
<comment type="similarity">
    <text evidence="4">Belongs to the prokaryotic molybdopterin-containing oxidoreductase family.</text>
</comment>
<sequence length="914" mass="102823">MNSPDEHNGRRRFLQFSAAALASAAASPSLWAFSKIQPIEDPLKDYPYRDWEDLYRKEWTWDSVGVMTHSNGCVAGCAWNVFVKNGIPMREEQISKYPQLPGIPDMNPRGCQKGAVYCSWSKQPDHIKWPLKRVGERGERKWKRISWDEALTEIADKIIDTTVKRGPGNIYIPKRPFAVITNTAYTRMTKLLGAISPDATSMTGDLYTGIQTVRVPASTVSTFDDWFTSDLILMWHKNPIVTRIPDAHFLMEARYNGARLVNISADYNPSSIHSDLFVPVTSGTDSHLAAALVNVLIAGKHYKADYLKEQTALPFLVRTDNGKFLREKDFKADGSDQVFYVWDTKAGKAVLAPGSMGSKDKTLKLGTIDPALEGNFETHGIKVTTVFERLKAEITPYTPEATQATTGVHPSVVRQLAGWIAECKALRILDGYNNQKHFDGFQCGRLKILILTLIGHHGTTGSIDTTFEGWRLEGNSELGTVKGKPGRSVSAVLAQWVWGEQYQRSKDYFNDAQLREELGFGVDEMESMRKESEANGWMPNWQSIKEPVVSITGGINMFATSNGYQHLRDNFLKRCELNVVVDFRLNSGAMYADIVLPAAENTEKLDIRETSVTRFIHAFGQPVKPMYERKTDWQIMVALAAKIQERAKARGIARVDDPEIKSGIDFDKIYDEFTMNGKVVTDEQAVRFVMDNSKALGPGTYEEVMKNGFVAVGPSAGKTGPVPKDKPYRPFTVNVTDKKPYGTLTGRLQFYVDHDWFQRLGATVPKPQYRGGVLGPKKYPFVRNSPHARWGVHSFARTEQWMLRHQRGEPDVRMSPKAMAAKGIKDGDMVRIFNDSGEFFAVVKAMPALPDNMLFTEHGWEQYQYKNMTHYNMVSSELINPLELVGGYGHIKYTSGGFNPNRIFYETTVDVEKA</sequence>
<gene>
    <name type="primary">clrA</name>
</gene>
<name>CLRA_IDEDE</name>
<evidence type="ECO:0000250" key="1"/>
<evidence type="ECO:0000255" key="2">
    <source>
        <dbReference type="PROSITE-ProRule" id="PRU00648"/>
    </source>
</evidence>
<evidence type="ECO:0000255" key="3">
    <source>
        <dbReference type="PROSITE-ProRule" id="PRU01004"/>
    </source>
</evidence>
<evidence type="ECO:0000305" key="4"/>